<sequence length="977" mass="109938">MKIKVTFQERIIEHNFETEITNLQQVTQKLCSLFLITNYYSYSLFLSSGQLVDNINLIDEGSEIIIKHLNRLGTISIGSGYSNSVVGTTNNNAPSSPSSSININGQQIQQQIQQQIQQQQQQQQQQQQQVQLSPDTLINNLLNNLKDNTFKKKAFFDLKDLKEEILIKKFVEKNGIEVIVCQLKELTGNTLSYALSALQTIMSYEFTITSMTSTDTASLITQLLPLTENTSNPSISKTSLSLLCLFLNQSNNLNFKQFSSTLVLEYNEKTKRNYNHTLVQLLSSSNTVDVQLNALTLINIIIGKTMSTTIPGLENGSVTGGENGFNKLLKELDEYEINQKLKKLVESIIVAPELKRQLYIYQRHRFQVITNRKNVTFNKESSEHDALLMKLWSLTYPGVKLESRVSEQWKQMGFQGTDPCTDFRAMGIWGLDNLIYFAQNYNEKFRKIVNSQIDRKEREYPTATAGIVLTFELYNSIFKMGTPNLNPYNSTTSNTTSNTTSTTNIDDLPFFPLFFSHPHAFEEVYCTTFQILDSTWDDMNGTYMHFQKIMSSVKNLIITALESKPTTLEAFDWKCQKNTKNSNGGTNSNQNNSSSNLLLSNFANGSSLLSLLNDLSSSSRDDMKKLLTGVNYQVLDLIKSQKISYFQEGFQFKLHKQLKTKQSLPLNWIFIRLFNNNNNNNNNNENCSYEIQYCFLSTELNQPPLPNQSIPTNYNTIKISDLFFNGESTNSNNKKKDKSLSYFNISIKDEQIQSLIQNQLPLSNLNNSSNSLQLDSSTSMNSIKDSIINISSSNNNIKDNLTNNNTNTNTNNTNNNTSNGNGNSNSVSMSSININNSGQLSPNTTSPILIPQQQQQQPQSSSLSVQHQQSSTPTPSSPVLLSSPSLQSSSSSSSSSSNPNLFTIDLISSNRDDVSNFWDSIKLLSGQEIKSQEGLDDYHSLLSINTSVKLLDLDGIDIPKETPQIPILPDNFDFRTV</sequence>
<proteinExistence type="evidence at protein level"/>
<feature type="chain" id="PRO_0000333278" description="ELMO domain-containing protein A">
    <location>
        <begin position="1"/>
        <end position="977"/>
    </location>
</feature>
<feature type="domain" description="ELMO" evidence="1">
    <location>
        <begin position="383"/>
        <end position="561"/>
    </location>
</feature>
<feature type="region of interest" description="Disordered" evidence="2">
    <location>
        <begin position="792"/>
        <end position="899"/>
    </location>
</feature>
<feature type="compositionally biased region" description="Low complexity" evidence="2">
    <location>
        <begin position="792"/>
        <end position="838"/>
    </location>
</feature>
<feature type="compositionally biased region" description="Low complexity" evidence="2">
    <location>
        <begin position="852"/>
        <end position="897"/>
    </location>
</feature>
<dbReference type="EMBL" id="AAFI02000023">
    <property type="protein sequence ID" value="EAL68198.1"/>
    <property type="molecule type" value="Genomic_DNA"/>
</dbReference>
<dbReference type="RefSeq" id="XP_642091.1">
    <property type="nucleotide sequence ID" value="XM_636999.1"/>
</dbReference>
<dbReference type="SMR" id="Q54YW1"/>
<dbReference type="FunCoup" id="Q54YW1">
    <property type="interactions" value="41"/>
</dbReference>
<dbReference type="IntAct" id="Q54YW1">
    <property type="interactions" value="1"/>
</dbReference>
<dbReference type="STRING" id="44689.Q54YW1"/>
<dbReference type="GlyGen" id="Q54YW1">
    <property type="glycosylation" value="1 site"/>
</dbReference>
<dbReference type="PaxDb" id="44689-DDB0233912"/>
<dbReference type="EnsemblProtists" id="EAL68198">
    <property type="protein sequence ID" value="EAL68198"/>
    <property type="gene ID" value="DDB_G0278051"/>
</dbReference>
<dbReference type="GeneID" id="8621302"/>
<dbReference type="KEGG" id="ddi:DDB_G0278051"/>
<dbReference type="dictyBase" id="DDB_G0278051">
    <property type="gene designation" value="elmoA"/>
</dbReference>
<dbReference type="VEuPathDB" id="AmoebaDB:DDB_G0278051"/>
<dbReference type="eggNOG" id="KOG2998">
    <property type="taxonomic scope" value="Eukaryota"/>
</dbReference>
<dbReference type="HOGENOM" id="CLU_304284_0_0_1"/>
<dbReference type="InParanoid" id="Q54YW1"/>
<dbReference type="OMA" id="FEEVYCT"/>
<dbReference type="PRO" id="PR:Q54YW1"/>
<dbReference type="Proteomes" id="UP000002195">
    <property type="component" value="Chromosome 3"/>
</dbReference>
<dbReference type="GO" id="GO:0005737">
    <property type="term" value="C:cytoplasm"/>
    <property type="evidence" value="ECO:0000314"/>
    <property type="project" value="dictyBase"/>
</dbReference>
<dbReference type="GO" id="GO:0005886">
    <property type="term" value="C:plasma membrane"/>
    <property type="evidence" value="ECO:0000318"/>
    <property type="project" value="GO_Central"/>
</dbReference>
<dbReference type="GO" id="GO:0045159">
    <property type="term" value="F:myosin II binding"/>
    <property type="evidence" value="ECO:0000353"/>
    <property type="project" value="dictyBase"/>
</dbReference>
<dbReference type="GO" id="GO:0007015">
    <property type="term" value="P:actin filament organization"/>
    <property type="evidence" value="ECO:0000318"/>
    <property type="project" value="GO_Central"/>
</dbReference>
<dbReference type="GO" id="GO:0048870">
    <property type="term" value="P:cell motility"/>
    <property type="evidence" value="ECO:0000315"/>
    <property type="project" value="dictyBase"/>
</dbReference>
<dbReference type="GO" id="GO:0030837">
    <property type="term" value="P:negative regulation of actin filament polymerization"/>
    <property type="evidence" value="ECO:0000315"/>
    <property type="project" value="dictyBase"/>
</dbReference>
<dbReference type="GO" id="GO:0050764">
    <property type="term" value="P:regulation of phagocytosis"/>
    <property type="evidence" value="ECO:0000315"/>
    <property type="project" value="dictyBase"/>
</dbReference>
<dbReference type="GO" id="GO:0030587">
    <property type="term" value="P:sorocarp development"/>
    <property type="evidence" value="ECO:0000315"/>
    <property type="project" value="dictyBase"/>
</dbReference>
<dbReference type="FunFam" id="1.25.10.10:FF:001931">
    <property type="entry name" value="ELMO domain-containing protein A"/>
    <property type="match status" value="1"/>
</dbReference>
<dbReference type="Gene3D" id="6.10.10.90">
    <property type="match status" value="1"/>
</dbReference>
<dbReference type="Gene3D" id="1.25.10.10">
    <property type="entry name" value="Leucine-rich Repeat Variant"/>
    <property type="match status" value="1"/>
</dbReference>
<dbReference type="InterPro" id="IPR011989">
    <property type="entry name" value="ARM-like"/>
</dbReference>
<dbReference type="InterPro" id="IPR016024">
    <property type="entry name" value="ARM-type_fold"/>
</dbReference>
<dbReference type="InterPro" id="IPR006816">
    <property type="entry name" value="ELMO_dom"/>
</dbReference>
<dbReference type="InterPro" id="IPR050868">
    <property type="entry name" value="ELMO_domain-containing"/>
</dbReference>
<dbReference type="InterPro" id="IPR056771">
    <property type="entry name" value="FH3_FHOD1-3-like"/>
</dbReference>
<dbReference type="PANTHER" id="PTHR12771:SF56">
    <property type="entry name" value="CED-12"/>
    <property type="match status" value="1"/>
</dbReference>
<dbReference type="PANTHER" id="PTHR12771">
    <property type="entry name" value="ENGULFMENT AND CELL MOTILITY"/>
    <property type="match status" value="1"/>
</dbReference>
<dbReference type="Pfam" id="PF04727">
    <property type="entry name" value="ELMO_CED12"/>
    <property type="match status" value="1"/>
</dbReference>
<dbReference type="Pfam" id="PF24959">
    <property type="entry name" value="FH3_FHOD1-3"/>
    <property type="match status" value="1"/>
</dbReference>
<dbReference type="SUPFAM" id="SSF48371">
    <property type="entry name" value="ARM repeat"/>
    <property type="match status" value="1"/>
</dbReference>
<dbReference type="PROSITE" id="PS51335">
    <property type="entry name" value="ELMO"/>
    <property type="match status" value="1"/>
</dbReference>
<accession>Q54YW1</accession>
<gene>
    <name type="primary">elmoA</name>
    <name type="ORF">DDB_G0278051</name>
</gene>
<reference key="1">
    <citation type="journal article" date="2005" name="Nature">
        <title>The genome of the social amoeba Dictyostelium discoideum.</title>
        <authorList>
            <person name="Eichinger L."/>
            <person name="Pachebat J.A."/>
            <person name="Gloeckner G."/>
            <person name="Rajandream M.A."/>
            <person name="Sucgang R."/>
            <person name="Berriman M."/>
            <person name="Song J."/>
            <person name="Olsen R."/>
            <person name="Szafranski K."/>
            <person name="Xu Q."/>
            <person name="Tunggal B."/>
            <person name="Kummerfeld S."/>
            <person name="Madera M."/>
            <person name="Konfortov B.A."/>
            <person name="Rivero F."/>
            <person name="Bankier A.T."/>
            <person name="Lehmann R."/>
            <person name="Hamlin N."/>
            <person name="Davies R."/>
            <person name="Gaudet P."/>
            <person name="Fey P."/>
            <person name="Pilcher K."/>
            <person name="Chen G."/>
            <person name="Saunders D."/>
            <person name="Sodergren E.J."/>
            <person name="Davis P."/>
            <person name="Kerhornou A."/>
            <person name="Nie X."/>
            <person name="Hall N."/>
            <person name="Anjard C."/>
            <person name="Hemphill L."/>
            <person name="Bason N."/>
            <person name="Farbrother P."/>
            <person name="Desany B."/>
            <person name="Just E."/>
            <person name="Morio T."/>
            <person name="Rost R."/>
            <person name="Churcher C.M."/>
            <person name="Cooper J."/>
            <person name="Haydock S."/>
            <person name="van Driessche N."/>
            <person name="Cronin A."/>
            <person name="Goodhead I."/>
            <person name="Muzny D.M."/>
            <person name="Mourier T."/>
            <person name="Pain A."/>
            <person name="Lu M."/>
            <person name="Harper D."/>
            <person name="Lindsay R."/>
            <person name="Hauser H."/>
            <person name="James K.D."/>
            <person name="Quiles M."/>
            <person name="Madan Babu M."/>
            <person name="Saito T."/>
            <person name="Buchrieser C."/>
            <person name="Wardroper A."/>
            <person name="Felder M."/>
            <person name="Thangavelu M."/>
            <person name="Johnson D."/>
            <person name="Knights A."/>
            <person name="Loulseged H."/>
            <person name="Mungall K.L."/>
            <person name="Oliver K."/>
            <person name="Price C."/>
            <person name="Quail M.A."/>
            <person name="Urushihara H."/>
            <person name="Hernandez J."/>
            <person name="Rabbinowitsch E."/>
            <person name="Steffen D."/>
            <person name="Sanders M."/>
            <person name="Ma J."/>
            <person name="Kohara Y."/>
            <person name="Sharp S."/>
            <person name="Simmonds M.N."/>
            <person name="Spiegler S."/>
            <person name="Tivey A."/>
            <person name="Sugano S."/>
            <person name="White B."/>
            <person name="Walker D."/>
            <person name="Woodward J.R."/>
            <person name="Winckler T."/>
            <person name="Tanaka Y."/>
            <person name="Shaulsky G."/>
            <person name="Schleicher M."/>
            <person name="Weinstock G.M."/>
            <person name="Rosenthal A."/>
            <person name="Cox E.C."/>
            <person name="Chisholm R.L."/>
            <person name="Gibbs R.A."/>
            <person name="Loomis W.F."/>
            <person name="Platzer M."/>
            <person name="Kay R.R."/>
            <person name="Williams J.G."/>
            <person name="Dear P.H."/>
            <person name="Noegel A.A."/>
            <person name="Barrell B.G."/>
            <person name="Kuspa A."/>
        </authorList>
    </citation>
    <scope>NUCLEOTIDE SEQUENCE [LARGE SCALE GENOMIC DNA]</scope>
    <source>
        <strain>AX4</strain>
    </source>
</reference>
<reference key="2">
    <citation type="journal article" date="2008" name="Dev. Cell">
        <title>An Elmo-like protein associated with myosin II restricts spurious F-actin events to coordinate phagocytosis and chemotaxis.</title>
        <authorList>
            <person name="Isik N."/>
            <person name="Brzostowski J.A."/>
            <person name="Jin T."/>
        </authorList>
    </citation>
    <scope>FUNCTION</scope>
    <scope>INTERACTION WITH MHCA</scope>
    <scope>DISRUPTION PHENOTYPE</scope>
</reference>
<organism>
    <name type="scientific">Dictyostelium discoideum</name>
    <name type="common">Social amoeba</name>
    <dbReference type="NCBI Taxonomy" id="44689"/>
    <lineage>
        <taxon>Eukaryota</taxon>
        <taxon>Amoebozoa</taxon>
        <taxon>Evosea</taxon>
        <taxon>Eumycetozoa</taxon>
        <taxon>Dictyostelia</taxon>
        <taxon>Dictyosteliales</taxon>
        <taxon>Dictyosteliaceae</taxon>
        <taxon>Dictyostelium</taxon>
    </lineage>
</organism>
<name>ELMOA_DICDI</name>
<protein>
    <recommendedName>
        <fullName>ELMO domain-containing protein A</fullName>
    </recommendedName>
</protein>
<comment type="function">
    <text evidence="3">Functions as a negative regulator of actin polymerization. Modulates actin/myosin II at cortex actinomyosins to prevent excessive F-actin polymerization around the cell periphery, thereby maintaining proper cell shape during phagocytosis and chemotaxis.</text>
</comment>
<comment type="subunit">
    <text>Associates with mhcA.</text>
</comment>
<comment type="interaction">
    <interactant intactId="EBI-2928498">
        <id>Q54YW1</id>
    </interactant>
    <interactant intactId="EBI-2928504">
        <id>P08799</id>
        <label>mhcA</label>
    </interactant>
    <organismsDiffer>false</organismsDiffer>
    <experiments>2</experiments>
</comment>
<comment type="disruption phenotype">
    <text evidence="3">Null mutants show the remarkable ability to engulf multiple particles simultaneously, also positively respond to a cAMP gradient but form spurious peudopods which are normally suppressed to promote efficient movement up a chemical gradient.</text>
</comment>
<evidence type="ECO:0000255" key="1">
    <source>
        <dbReference type="PROSITE-ProRule" id="PRU00664"/>
    </source>
</evidence>
<evidence type="ECO:0000256" key="2">
    <source>
        <dbReference type="SAM" id="MobiDB-lite"/>
    </source>
</evidence>
<evidence type="ECO:0000269" key="3">
    <source>
    </source>
</evidence>
<keyword id="KW-1185">Reference proteome</keyword>